<keyword id="KW-1003">Cell membrane</keyword>
<keyword id="KW-0472">Membrane</keyword>
<keyword id="KW-1185">Reference proteome</keyword>
<gene>
    <name type="ordered locus">Caur_0398</name>
</gene>
<protein>
    <recommendedName>
        <fullName evidence="1">Putative membrane protein insertion efficiency factor</fullName>
    </recommendedName>
</protein>
<sequence length="70" mass="8104">MLRWLLLKLIRFYQVAISPWTPPSCIYTPTCSHYGYEAIKKYGALRGGWMTVKRIARCHPFARGGYDPVP</sequence>
<organism>
    <name type="scientific">Chloroflexus aurantiacus (strain ATCC 29366 / DSM 635 / J-10-fl)</name>
    <dbReference type="NCBI Taxonomy" id="324602"/>
    <lineage>
        <taxon>Bacteria</taxon>
        <taxon>Bacillati</taxon>
        <taxon>Chloroflexota</taxon>
        <taxon>Chloroflexia</taxon>
        <taxon>Chloroflexales</taxon>
        <taxon>Chloroflexineae</taxon>
        <taxon>Chloroflexaceae</taxon>
        <taxon>Chloroflexus</taxon>
    </lineage>
</organism>
<dbReference type="EMBL" id="CP000909">
    <property type="protein sequence ID" value="ABY33648.1"/>
    <property type="molecule type" value="Genomic_DNA"/>
</dbReference>
<dbReference type="RefSeq" id="YP_001634037.1">
    <property type="nucleotide sequence ID" value="NC_010175.1"/>
</dbReference>
<dbReference type="FunCoup" id="A9WDP2">
    <property type="interactions" value="288"/>
</dbReference>
<dbReference type="STRING" id="324602.Caur_0398"/>
<dbReference type="EnsemblBacteria" id="ABY33648">
    <property type="protein sequence ID" value="ABY33648"/>
    <property type="gene ID" value="Caur_0398"/>
</dbReference>
<dbReference type="KEGG" id="cau:Caur_0398"/>
<dbReference type="PATRIC" id="fig|324602.8.peg.451"/>
<dbReference type="eggNOG" id="COG0759">
    <property type="taxonomic scope" value="Bacteria"/>
</dbReference>
<dbReference type="HOGENOM" id="CLU_144811_6_1_0"/>
<dbReference type="InParanoid" id="A9WDP2"/>
<dbReference type="Proteomes" id="UP000002008">
    <property type="component" value="Chromosome"/>
</dbReference>
<dbReference type="GO" id="GO:0005886">
    <property type="term" value="C:plasma membrane"/>
    <property type="evidence" value="ECO:0007669"/>
    <property type="project" value="UniProtKB-SubCell"/>
</dbReference>
<dbReference type="HAMAP" id="MF_00386">
    <property type="entry name" value="UPF0161_YidD"/>
    <property type="match status" value="1"/>
</dbReference>
<dbReference type="InterPro" id="IPR002696">
    <property type="entry name" value="Membr_insert_effic_factor_YidD"/>
</dbReference>
<dbReference type="NCBIfam" id="TIGR00278">
    <property type="entry name" value="membrane protein insertion efficiency factor YidD"/>
    <property type="match status" value="1"/>
</dbReference>
<dbReference type="PANTHER" id="PTHR33383">
    <property type="entry name" value="MEMBRANE PROTEIN INSERTION EFFICIENCY FACTOR-RELATED"/>
    <property type="match status" value="1"/>
</dbReference>
<dbReference type="PANTHER" id="PTHR33383:SF1">
    <property type="entry name" value="MEMBRANE PROTEIN INSERTION EFFICIENCY FACTOR-RELATED"/>
    <property type="match status" value="1"/>
</dbReference>
<dbReference type="Pfam" id="PF01809">
    <property type="entry name" value="YidD"/>
    <property type="match status" value="1"/>
</dbReference>
<dbReference type="SMART" id="SM01234">
    <property type="entry name" value="Haemolytic"/>
    <property type="match status" value="1"/>
</dbReference>
<proteinExistence type="inferred from homology"/>
<reference key="1">
    <citation type="journal article" date="2011" name="BMC Genomics">
        <title>Complete genome sequence of the filamentous anoxygenic phototrophic bacterium Chloroflexus aurantiacus.</title>
        <authorList>
            <person name="Tang K.H."/>
            <person name="Barry K."/>
            <person name="Chertkov O."/>
            <person name="Dalin E."/>
            <person name="Han C.S."/>
            <person name="Hauser L.J."/>
            <person name="Honchak B.M."/>
            <person name="Karbach L.E."/>
            <person name="Land M.L."/>
            <person name="Lapidus A."/>
            <person name="Larimer F.W."/>
            <person name="Mikhailova N."/>
            <person name="Pitluck S."/>
            <person name="Pierson B.K."/>
            <person name="Blankenship R.E."/>
        </authorList>
    </citation>
    <scope>NUCLEOTIDE SEQUENCE [LARGE SCALE GENOMIC DNA]</scope>
    <source>
        <strain>ATCC 29366 / DSM 635 / J-10-fl</strain>
    </source>
</reference>
<name>YIDD_CHLAA</name>
<feature type="chain" id="PRO_1000122626" description="Putative membrane protein insertion efficiency factor">
    <location>
        <begin position="1"/>
        <end position="70"/>
    </location>
</feature>
<accession>A9WDP2</accession>
<evidence type="ECO:0000255" key="1">
    <source>
        <dbReference type="HAMAP-Rule" id="MF_00386"/>
    </source>
</evidence>
<comment type="function">
    <text evidence="1">Could be involved in insertion of integral membrane proteins into the membrane.</text>
</comment>
<comment type="subcellular location">
    <subcellularLocation>
        <location evidence="1">Cell membrane</location>
        <topology evidence="1">Peripheral membrane protein</topology>
        <orientation evidence="1">Cytoplasmic side</orientation>
    </subcellularLocation>
</comment>
<comment type="similarity">
    <text evidence="1">Belongs to the UPF0161 family.</text>
</comment>